<evidence type="ECO:0000255" key="1"/>
<evidence type="ECO:0000305" key="2"/>
<keyword id="KW-1003">Cell membrane</keyword>
<keyword id="KW-0472">Membrane</keyword>
<keyword id="KW-1185">Reference proteome</keyword>
<keyword id="KW-0812">Transmembrane</keyword>
<keyword id="KW-1133">Transmembrane helix</keyword>
<feature type="chain" id="PRO_0000106979" description="Uncharacterized protein MJ0662">
    <location>
        <begin position="1"/>
        <end position="239"/>
    </location>
</feature>
<feature type="transmembrane region" description="Helical" evidence="1">
    <location>
        <begin position="9"/>
        <end position="29"/>
    </location>
</feature>
<feature type="transmembrane region" description="Helical" evidence="1">
    <location>
        <begin position="65"/>
        <end position="85"/>
    </location>
</feature>
<feature type="transmembrane region" description="Helical" evidence="1">
    <location>
        <begin position="94"/>
        <end position="114"/>
    </location>
</feature>
<feature type="transmembrane region" description="Helical" evidence="1">
    <location>
        <begin position="167"/>
        <end position="187"/>
    </location>
</feature>
<protein>
    <recommendedName>
        <fullName>Uncharacterized protein MJ0662</fullName>
    </recommendedName>
</protein>
<gene>
    <name type="ordered locus">MJ0662</name>
</gene>
<comment type="subcellular location">
    <subcellularLocation>
        <location evidence="2">Cell membrane</location>
        <topology evidence="2">Multi-pass membrane protein</topology>
    </subcellularLocation>
</comment>
<name>Y662_METJA</name>
<organism>
    <name type="scientific">Methanocaldococcus jannaschii (strain ATCC 43067 / DSM 2661 / JAL-1 / JCM 10045 / NBRC 100440)</name>
    <name type="common">Methanococcus jannaschii</name>
    <dbReference type="NCBI Taxonomy" id="243232"/>
    <lineage>
        <taxon>Archaea</taxon>
        <taxon>Methanobacteriati</taxon>
        <taxon>Methanobacteriota</taxon>
        <taxon>Methanomada group</taxon>
        <taxon>Methanococci</taxon>
        <taxon>Methanococcales</taxon>
        <taxon>Methanocaldococcaceae</taxon>
        <taxon>Methanocaldococcus</taxon>
    </lineage>
</organism>
<accession>Q58076</accession>
<reference key="1">
    <citation type="journal article" date="1996" name="Science">
        <title>Complete genome sequence of the methanogenic archaeon, Methanococcus jannaschii.</title>
        <authorList>
            <person name="Bult C.J."/>
            <person name="White O."/>
            <person name="Olsen G.J."/>
            <person name="Zhou L."/>
            <person name="Fleischmann R.D."/>
            <person name="Sutton G.G."/>
            <person name="Blake J.A."/>
            <person name="FitzGerald L.M."/>
            <person name="Clayton R.A."/>
            <person name="Gocayne J.D."/>
            <person name="Kerlavage A.R."/>
            <person name="Dougherty B.A."/>
            <person name="Tomb J.-F."/>
            <person name="Adams M.D."/>
            <person name="Reich C.I."/>
            <person name="Overbeek R."/>
            <person name="Kirkness E.F."/>
            <person name="Weinstock K.G."/>
            <person name="Merrick J.M."/>
            <person name="Glodek A."/>
            <person name="Scott J.L."/>
            <person name="Geoghagen N.S.M."/>
            <person name="Weidman J.F."/>
            <person name="Fuhrmann J.L."/>
            <person name="Nguyen D."/>
            <person name="Utterback T.R."/>
            <person name="Kelley J.M."/>
            <person name="Peterson J.D."/>
            <person name="Sadow P.W."/>
            <person name="Hanna M.C."/>
            <person name="Cotton M.D."/>
            <person name="Roberts K.M."/>
            <person name="Hurst M.A."/>
            <person name="Kaine B.P."/>
            <person name="Borodovsky M."/>
            <person name="Klenk H.-P."/>
            <person name="Fraser C.M."/>
            <person name="Smith H.O."/>
            <person name="Woese C.R."/>
            <person name="Venter J.C."/>
        </authorList>
    </citation>
    <scope>NUCLEOTIDE SEQUENCE [LARGE SCALE GENOMIC DNA]</scope>
    <source>
        <strain>ATCC 43067 / DSM 2661 / JAL-1 / JCM 10045 / NBRC 100440</strain>
    </source>
</reference>
<sequence length="239" mass="27769">MDKRILVRLAIYPIAYVLWGGLMWYSQIITPLDVTNLLLKLPLCNKEFYIFLQSLPNIVIEFFKIIYLYGFSSMIIGGIAYYLFIKRDFLKSDIILIDLALGWLFAGLIYTFVVVKSPFQVGVAKDLINMHYFWIFTKPTYEIPSLHTAYSFLLALHFKDEKPLNYIYFALAILIPISTLIMGMHWIVDVITGVLYGYIIYKFPKTIHIKISKALDFLAGHIKPCILCGKCKERETHEK</sequence>
<dbReference type="EMBL" id="L77117">
    <property type="protein sequence ID" value="AAB98659.1"/>
    <property type="molecule type" value="Genomic_DNA"/>
</dbReference>
<dbReference type="PIR" id="F64382">
    <property type="entry name" value="F64382"/>
</dbReference>
<dbReference type="RefSeq" id="WP_010870167.1">
    <property type="nucleotide sequence ID" value="NC_000909.1"/>
</dbReference>
<dbReference type="STRING" id="243232.MJ_0662"/>
<dbReference type="PaxDb" id="243232-MJ_0662"/>
<dbReference type="EnsemblBacteria" id="AAB98659">
    <property type="protein sequence ID" value="AAB98659"/>
    <property type="gene ID" value="MJ_0662"/>
</dbReference>
<dbReference type="GeneID" id="1451528"/>
<dbReference type="KEGG" id="mja:MJ_0662"/>
<dbReference type="eggNOG" id="arCOG03951">
    <property type="taxonomic scope" value="Archaea"/>
</dbReference>
<dbReference type="HOGENOM" id="CLU_1318521_0_0_2"/>
<dbReference type="InParanoid" id="Q58076"/>
<dbReference type="OrthoDB" id="329477at2157"/>
<dbReference type="PhylomeDB" id="Q58076"/>
<dbReference type="Proteomes" id="UP000000805">
    <property type="component" value="Chromosome"/>
</dbReference>
<dbReference type="GO" id="GO:0005886">
    <property type="term" value="C:plasma membrane"/>
    <property type="evidence" value="ECO:0007669"/>
    <property type="project" value="UniProtKB-SubCell"/>
</dbReference>
<dbReference type="Gene3D" id="1.20.144.10">
    <property type="entry name" value="Phosphatidic acid phosphatase type 2/haloperoxidase"/>
    <property type="match status" value="1"/>
</dbReference>
<dbReference type="InterPro" id="IPR026841">
    <property type="entry name" value="Aur1/Ipt1"/>
</dbReference>
<dbReference type="InterPro" id="IPR036938">
    <property type="entry name" value="P_Acid_Pase_2/haloperoxi_sf"/>
</dbReference>
<dbReference type="InterPro" id="IPR000326">
    <property type="entry name" value="P_Acid_Pase_2/haloperoxidase"/>
</dbReference>
<dbReference type="Pfam" id="PF14378">
    <property type="entry name" value="PAP2_3"/>
    <property type="match status" value="1"/>
</dbReference>
<dbReference type="SMART" id="SM00014">
    <property type="entry name" value="acidPPc"/>
    <property type="match status" value="1"/>
</dbReference>
<dbReference type="SUPFAM" id="SSF48317">
    <property type="entry name" value="Acid phosphatase/Vanadium-dependent haloperoxidase"/>
    <property type="match status" value="1"/>
</dbReference>
<proteinExistence type="predicted"/>